<accession>P11834</accession>
<protein>
    <recommendedName>
        <fullName>Opioid-binding protein/cell adhesion molecule</fullName>
        <shortName>OBCAM</shortName>
        <shortName>OPCML</shortName>
        <shortName>Opioid-binding cell adhesion molecule</shortName>
    </recommendedName>
</protein>
<sequence>MGVCGSLFQPWKCLVVVSLRLLFLVPTGVPVRSGDATFPKAMDNVTVRQGESATLRCTIDDRVTRVAWLNRSTILYAGNDKWSIDPRVIILVNTPTQYSIMIQNVDVYDEGPYTCSVQTDNHPKTSRVHLIVQVPPQIMNISSDVTVNEGSSVTLLCLAIGRPEPTVTWRHLSVKEGQGFVSEDEYLEISDIKRDQSGEYECSALNDVAAPDVRKVKITVNYPPYISKAKNTGVSVGQKGILSCEASAVPMAEFQWFKEDTRLATGLDGMRIENKGHISTLTFFNVSEKDYGNYTCVATNKLGITNASITLYGPGAVIDGVNSASRALACLWLSGTLFAHFFIKF</sequence>
<keyword id="KW-0130">Cell adhesion</keyword>
<keyword id="KW-1003">Cell membrane</keyword>
<keyword id="KW-0903">Direct protein sequencing</keyword>
<keyword id="KW-1015">Disulfide bond</keyword>
<keyword id="KW-0325">Glycoprotein</keyword>
<keyword id="KW-0336">GPI-anchor</keyword>
<keyword id="KW-0393">Immunoglobulin domain</keyword>
<keyword id="KW-0449">Lipoprotein</keyword>
<keyword id="KW-0472">Membrane</keyword>
<keyword id="KW-1185">Reference proteome</keyword>
<keyword id="KW-0677">Repeat</keyword>
<keyword id="KW-0732">Signal</keyword>
<gene>
    <name type="primary">OPCML</name>
    <name type="synonym">OBCAM</name>
    <name type="synonym">OCAM</name>
</gene>
<evidence type="ECO:0000250" key="1"/>
<evidence type="ECO:0000255" key="2"/>
<evidence type="ECO:0000255" key="3">
    <source>
        <dbReference type="PROSITE-ProRule" id="PRU00114"/>
    </source>
</evidence>
<evidence type="ECO:0000305" key="4"/>
<organism>
    <name type="scientific">Bos taurus</name>
    <name type="common">Bovine</name>
    <dbReference type="NCBI Taxonomy" id="9913"/>
    <lineage>
        <taxon>Eukaryota</taxon>
        <taxon>Metazoa</taxon>
        <taxon>Chordata</taxon>
        <taxon>Craniata</taxon>
        <taxon>Vertebrata</taxon>
        <taxon>Euteleostomi</taxon>
        <taxon>Mammalia</taxon>
        <taxon>Eutheria</taxon>
        <taxon>Laurasiatheria</taxon>
        <taxon>Artiodactyla</taxon>
        <taxon>Ruminantia</taxon>
        <taxon>Pecora</taxon>
        <taxon>Bovidae</taxon>
        <taxon>Bovinae</taxon>
        <taxon>Bos</taxon>
    </lineage>
</organism>
<feature type="signal peptide">
    <location>
        <begin position="1"/>
        <end position="27"/>
    </location>
</feature>
<feature type="chain" id="PRO_0000015116" description="Opioid-binding protein/cell adhesion molecule">
    <location>
        <begin position="28"/>
        <end position="322"/>
    </location>
</feature>
<feature type="propeptide" id="PRO_0000015117" description="Removed in mature form" evidence="2">
    <location>
        <begin position="323"/>
        <end position="345"/>
    </location>
</feature>
<feature type="domain" description="Ig-like C2-type 1">
    <location>
        <begin position="39"/>
        <end position="126"/>
    </location>
</feature>
<feature type="domain" description="Ig-like C2-type 2">
    <location>
        <begin position="136"/>
        <end position="219"/>
    </location>
</feature>
<feature type="domain" description="Ig-like C2-type 3">
    <location>
        <begin position="223"/>
        <end position="310"/>
    </location>
</feature>
<feature type="lipid moiety-binding region" description="GPI-anchor amidated asparagine" evidence="2">
    <location>
        <position position="322"/>
    </location>
</feature>
<feature type="glycosylation site" description="N-linked (GlcNAc...) asparagine" evidence="4">
    <location>
        <position position="44"/>
    </location>
</feature>
<feature type="glycosylation site" description="N-linked (GlcNAc...) asparagine" evidence="2">
    <location>
        <position position="70"/>
    </location>
</feature>
<feature type="glycosylation site" description="N-linked (GlcNAc...) asparagine" evidence="2">
    <location>
        <position position="140"/>
    </location>
</feature>
<feature type="glycosylation site" description="N-linked (GlcNAc...) asparagine" evidence="4">
    <location>
        <position position="285"/>
    </location>
</feature>
<feature type="glycosylation site" description="N-linked (GlcNAc...) asparagine" evidence="2">
    <location>
        <position position="293"/>
    </location>
</feature>
<feature type="glycosylation site" description="N-linked (GlcNAc...) asparagine" evidence="2">
    <location>
        <position position="306"/>
    </location>
</feature>
<feature type="disulfide bond" evidence="3">
    <location>
        <begin position="57"/>
        <end position="115"/>
    </location>
</feature>
<feature type="disulfide bond" evidence="3">
    <location>
        <begin position="157"/>
        <end position="202"/>
    </location>
</feature>
<feature type="disulfide bond" evidence="3">
    <location>
        <begin position="244"/>
        <end position="296"/>
    </location>
</feature>
<name>OPCM_BOVIN</name>
<reference key="1">
    <citation type="journal article" date="1989" name="EMBO J.">
        <title>Molecular characterization of a new immunoglobulin superfamily protein with potential roles in opioid binding and cell contact.</title>
        <authorList>
            <person name="Schofield P.R."/>
            <person name="McFarland K.C."/>
            <person name="Hayflick J.S."/>
            <person name="Wilcox J.N."/>
            <person name="Cho T.M."/>
            <person name="Roy S."/>
            <person name="Lee N.M."/>
            <person name="Loh H.H."/>
            <person name="Seeburg P.H."/>
        </authorList>
    </citation>
    <scope>NUCLEOTIDE SEQUENCE [MRNA]</scope>
    <scope>PARTIAL PROTEIN SEQUENCE</scope>
    <source>
        <tissue>Brain</tissue>
    </source>
</reference>
<proteinExistence type="evidence at protein level"/>
<comment type="function">
    <text>Binds opioids in the presence of acidic lipids; probably involved in cell contact.</text>
</comment>
<comment type="subcellular location">
    <subcellularLocation>
        <location evidence="1">Cell membrane</location>
        <topology evidence="1">Lipid-anchor</topology>
        <topology evidence="1">GPI-anchor</topology>
    </subcellularLocation>
</comment>
<comment type="similarity">
    <text evidence="4">Belongs to the immunoglobulin superfamily. IgLON family.</text>
</comment>
<dbReference type="EMBL" id="X12672">
    <property type="protein sequence ID" value="CAA31192.1"/>
    <property type="molecule type" value="mRNA"/>
</dbReference>
<dbReference type="PIR" id="S03199">
    <property type="entry name" value="S03199"/>
</dbReference>
<dbReference type="RefSeq" id="NP_776832.1">
    <property type="nucleotide sequence ID" value="NM_174407.2"/>
</dbReference>
<dbReference type="SMR" id="P11834"/>
<dbReference type="FunCoup" id="P11834">
    <property type="interactions" value="664"/>
</dbReference>
<dbReference type="STRING" id="9913.ENSBTAP00000027678"/>
<dbReference type="GlyCosmos" id="P11834">
    <property type="glycosylation" value="6 sites, No reported glycans"/>
</dbReference>
<dbReference type="GlyGen" id="P11834">
    <property type="glycosylation" value="6 sites"/>
</dbReference>
<dbReference type="PaxDb" id="9913-ENSBTAP00000027678"/>
<dbReference type="Ensembl" id="ENSBTAT00000083522.2">
    <property type="protein sequence ID" value="ENSBTAP00000069010.2"/>
    <property type="gene ID" value="ENSBTAG00000020769.7"/>
</dbReference>
<dbReference type="GeneID" id="281957"/>
<dbReference type="KEGG" id="bta:281957"/>
<dbReference type="CTD" id="4978"/>
<dbReference type="VEuPathDB" id="HostDB:ENSBTAG00000020769"/>
<dbReference type="VGNC" id="VGNC:32435">
    <property type="gene designation" value="OPCML"/>
</dbReference>
<dbReference type="eggNOG" id="KOG3510">
    <property type="taxonomic scope" value="Eukaryota"/>
</dbReference>
<dbReference type="GeneTree" id="ENSGT00940000160304"/>
<dbReference type="InParanoid" id="P11834"/>
<dbReference type="OMA" id="RKYKVGW"/>
<dbReference type="OrthoDB" id="6159398at2759"/>
<dbReference type="Reactome" id="R-BTA-163125">
    <property type="pathway name" value="Post-translational modification: synthesis of GPI-anchored proteins"/>
</dbReference>
<dbReference type="Proteomes" id="UP000009136">
    <property type="component" value="Chromosome 29"/>
</dbReference>
<dbReference type="Bgee" id="ENSBTAG00000020769">
    <property type="expression patterns" value="Expressed in prefrontal cortex and 45 other cell types or tissues"/>
</dbReference>
<dbReference type="GO" id="GO:0005886">
    <property type="term" value="C:plasma membrane"/>
    <property type="evidence" value="ECO:0007669"/>
    <property type="project" value="UniProtKB-SubCell"/>
</dbReference>
<dbReference type="GO" id="GO:0098552">
    <property type="term" value="C:side of membrane"/>
    <property type="evidence" value="ECO:0007669"/>
    <property type="project" value="UniProtKB-KW"/>
</dbReference>
<dbReference type="GO" id="GO:0007155">
    <property type="term" value="P:cell adhesion"/>
    <property type="evidence" value="ECO:0007669"/>
    <property type="project" value="UniProtKB-KW"/>
</dbReference>
<dbReference type="FunFam" id="2.60.40.10:FF:000013">
    <property type="entry name" value="cell adhesion molecule 1 isoform X1"/>
    <property type="match status" value="1"/>
</dbReference>
<dbReference type="FunFam" id="2.60.40.10:FF:000305">
    <property type="entry name" value="neurotrimin isoform X2"/>
    <property type="match status" value="1"/>
</dbReference>
<dbReference type="FunFam" id="2.60.40.10:FF:000113">
    <property type="entry name" value="Opioid-binding protein/cell adhesion molecule"/>
    <property type="match status" value="1"/>
</dbReference>
<dbReference type="Gene3D" id="2.60.40.10">
    <property type="entry name" value="Immunoglobulins"/>
    <property type="match status" value="3"/>
</dbReference>
<dbReference type="InterPro" id="IPR007110">
    <property type="entry name" value="Ig-like_dom"/>
</dbReference>
<dbReference type="InterPro" id="IPR036179">
    <property type="entry name" value="Ig-like_dom_sf"/>
</dbReference>
<dbReference type="InterPro" id="IPR013783">
    <property type="entry name" value="Ig-like_fold"/>
</dbReference>
<dbReference type="InterPro" id="IPR013098">
    <property type="entry name" value="Ig_I-set"/>
</dbReference>
<dbReference type="InterPro" id="IPR003599">
    <property type="entry name" value="Ig_sub"/>
</dbReference>
<dbReference type="InterPro" id="IPR003598">
    <property type="entry name" value="Ig_sub2"/>
</dbReference>
<dbReference type="InterPro" id="IPR050876">
    <property type="entry name" value="IgLON_domain"/>
</dbReference>
<dbReference type="InterPro" id="IPR013151">
    <property type="entry name" value="Immunoglobulin_dom"/>
</dbReference>
<dbReference type="PANTHER" id="PTHR42757">
    <property type="entry name" value="IGLON FAMILY OF IMMUNOGLOBULIN SUPERFAMILY-RELATED"/>
    <property type="match status" value="1"/>
</dbReference>
<dbReference type="PANTHER" id="PTHR42757:SF17">
    <property type="entry name" value="OPIOID-BINDING PROTEIN_CELL ADHESION MOLECULE"/>
    <property type="match status" value="1"/>
</dbReference>
<dbReference type="Pfam" id="PF07679">
    <property type="entry name" value="I-set"/>
    <property type="match status" value="1"/>
</dbReference>
<dbReference type="Pfam" id="PF00047">
    <property type="entry name" value="ig"/>
    <property type="match status" value="1"/>
</dbReference>
<dbReference type="Pfam" id="PF13927">
    <property type="entry name" value="Ig_3"/>
    <property type="match status" value="1"/>
</dbReference>
<dbReference type="SMART" id="SM00409">
    <property type="entry name" value="IG"/>
    <property type="match status" value="3"/>
</dbReference>
<dbReference type="SMART" id="SM00408">
    <property type="entry name" value="IGc2"/>
    <property type="match status" value="3"/>
</dbReference>
<dbReference type="SUPFAM" id="SSF48726">
    <property type="entry name" value="Immunoglobulin"/>
    <property type="match status" value="3"/>
</dbReference>
<dbReference type="PROSITE" id="PS50835">
    <property type="entry name" value="IG_LIKE"/>
    <property type="match status" value="3"/>
</dbReference>